<accession>Q97IG3</accession>
<organism>
    <name type="scientific">Clostridium acetobutylicum (strain ATCC 824 / DSM 792 / JCM 1419 / IAM 19013 / LMG 5710 / NBRC 13948 / NRRL B-527 / VKM B-1787 / 2291 / W)</name>
    <dbReference type="NCBI Taxonomy" id="272562"/>
    <lineage>
        <taxon>Bacteria</taxon>
        <taxon>Bacillati</taxon>
        <taxon>Bacillota</taxon>
        <taxon>Clostridia</taxon>
        <taxon>Eubacteriales</taxon>
        <taxon>Clostridiaceae</taxon>
        <taxon>Clostridium</taxon>
    </lineage>
</organism>
<reference key="1">
    <citation type="journal article" date="2001" name="J. Bacteriol.">
        <title>Genome sequence and comparative analysis of the solvent-producing bacterium Clostridium acetobutylicum.</title>
        <authorList>
            <person name="Noelling J."/>
            <person name="Breton G."/>
            <person name="Omelchenko M.V."/>
            <person name="Makarova K.S."/>
            <person name="Zeng Q."/>
            <person name="Gibson R."/>
            <person name="Lee H.M."/>
            <person name="Dubois J."/>
            <person name="Qiu D."/>
            <person name="Hitti J."/>
            <person name="Wolf Y.I."/>
            <person name="Tatusov R.L."/>
            <person name="Sabathe F."/>
            <person name="Doucette-Stamm L.A."/>
            <person name="Soucaille P."/>
            <person name="Daly M.J."/>
            <person name="Bennett G.N."/>
            <person name="Koonin E.V."/>
            <person name="Smith D.R."/>
        </authorList>
    </citation>
    <scope>NUCLEOTIDE SEQUENCE [LARGE SCALE GENOMIC DNA]</scope>
    <source>
        <strain>ATCC 824 / DSM 792 / JCM 1419 / IAM 19013 / LMG 5710 / NBRC 13948 / NRRL B-527 / VKM B-1787 / 2291 / W</strain>
    </source>
</reference>
<keyword id="KW-0030">Aminoacyl-tRNA synthetase</keyword>
<keyword id="KW-0067">ATP-binding</keyword>
<keyword id="KW-0963">Cytoplasm</keyword>
<keyword id="KW-0436">Ligase</keyword>
<keyword id="KW-0479">Metal-binding</keyword>
<keyword id="KW-0547">Nucleotide-binding</keyword>
<keyword id="KW-0648">Protein biosynthesis</keyword>
<keyword id="KW-1185">Reference proteome</keyword>
<keyword id="KW-0694">RNA-binding</keyword>
<keyword id="KW-0820">tRNA-binding</keyword>
<keyword id="KW-0862">Zinc</keyword>
<dbReference type="EC" id="6.1.1.7" evidence="1"/>
<dbReference type="EMBL" id="AE001437">
    <property type="protein sequence ID" value="AAK79644.1"/>
    <property type="molecule type" value="Genomic_DNA"/>
</dbReference>
<dbReference type="PIR" id="A97107">
    <property type="entry name" value="A97107"/>
</dbReference>
<dbReference type="RefSeq" id="NP_348304.1">
    <property type="nucleotide sequence ID" value="NC_003030.1"/>
</dbReference>
<dbReference type="RefSeq" id="WP_010964985.1">
    <property type="nucleotide sequence ID" value="NC_003030.1"/>
</dbReference>
<dbReference type="SMR" id="Q97IG3"/>
<dbReference type="STRING" id="272562.CA_C1678"/>
<dbReference type="GeneID" id="44998173"/>
<dbReference type="KEGG" id="cac:CA_C1678"/>
<dbReference type="PATRIC" id="fig|272562.8.peg.1881"/>
<dbReference type="eggNOG" id="COG0013">
    <property type="taxonomic scope" value="Bacteria"/>
</dbReference>
<dbReference type="HOGENOM" id="CLU_004485_1_1_9"/>
<dbReference type="OrthoDB" id="9803884at2"/>
<dbReference type="Proteomes" id="UP000000814">
    <property type="component" value="Chromosome"/>
</dbReference>
<dbReference type="GO" id="GO:0005829">
    <property type="term" value="C:cytosol"/>
    <property type="evidence" value="ECO:0007669"/>
    <property type="project" value="TreeGrafter"/>
</dbReference>
<dbReference type="GO" id="GO:0004813">
    <property type="term" value="F:alanine-tRNA ligase activity"/>
    <property type="evidence" value="ECO:0007669"/>
    <property type="project" value="UniProtKB-UniRule"/>
</dbReference>
<dbReference type="GO" id="GO:0002161">
    <property type="term" value="F:aminoacyl-tRNA deacylase activity"/>
    <property type="evidence" value="ECO:0007669"/>
    <property type="project" value="TreeGrafter"/>
</dbReference>
<dbReference type="GO" id="GO:0005524">
    <property type="term" value="F:ATP binding"/>
    <property type="evidence" value="ECO:0007669"/>
    <property type="project" value="UniProtKB-UniRule"/>
</dbReference>
<dbReference type="GO" id="GO:0140096">
    <property type="term" value="F:catalytic activity, acting on a protein"/>
    <property type="evidence" value="ECO:0007669"/>
    <property type="project" value="UniProtKB-ARBA"/>
</dbReference>
<dbReference type="GO" id="GO:0016740">
    <property type="term" value="F:transferase activity"/>
    <property type="evidence" value="ECO:0007669"/>
    <property type="project" value="UniProtKB-ARBA"/>
</dbReference>
<dbReference type="GO" id="GO:0000049">
    <property type="term" value="F:tRNA binding"/>
    <property type="evidence" value="ECO:0007669"/>
    <property type="project" value="UniProtKB-KW"/>
</dbReference>
<dbReference type="GO" id="GO:0008270">
    <property type="term" value="F:zinc ion binding"/>
    <property type="evidence" value="ECO:0007669"/>
    <property type="project" value="UniProtKB-UniRule"/>
</dbReference>
<dbReference type="GO" id="GO:0006419">
    <property type="term" value="P:alanyl-tRNA aminoacylation"/>
    <property type="evidence" value="ECO:0007669"/>
    <property type="project" value="UniProtKB-UniRule"/>
</dbReference>
<dbReference type="CDD" id="cd00673">
    <property type="entry name" value="AlaRS_core"/>
    <property type="match status" value="1"/>
</dbReference>
<dbReference type="FunFam" id="2.40.30.130:FF:000001">
    <property type="entry name" value="Alanine--tRNA ligase"/>
    <property type="match status" value="1"/>
</dbReference>
<dbReference type="FunFam" id="3.10.310.40:FF:000001">
    <property type="entry name" value="Alanine--tRNA ligase"/>
    <property type="match status" value="1"/>
</dbReference>
<dbReference type="FunFam" id="3.30.54.20:FF:000001">
    <property type="entry name" value="Alanine--tRNA ligase"/>
    <property type="match status" value="1"/>
</dbReference>
<dbReference type="FunFam" id="3.30.930.10:FF:000004">
    <property type="entry name" value="Alanine--tRNA ligase"/>
    <property type="match status" value="1"/>
</dbReference>
<dbReference type="FunFam" id="3.30.980.10:FF:000004">
    <property type="entry name" value="Alanine--tRNA ligase, cytoplasmic"/>
    <property type="match status" value="1"/>
</dbReference>
<dbReference type="Gene3D" id="2.40.30.130">
    <property type="match status" value="1"/>
</dbReference>
<dbReference type="Gene3D" id="3.10.310.40">
    <property type="match status" value="1"/>
</dbReference>
<dbReference type="Gene3D" id="3.30.54.20">
    <property type="match status" value="1"/>
</dbReference>
<dbReference type="Gene3D" id="6.10.250.550">
    <property type="match status" value="1"/>
</dbReference>
<dbReference type="Gene3D" id="3.30.930.10">
    <property type="entry name" value="Bira Bifunctional Protein, Domain 2"/>
    <property type="match status" value="1"/>
</dbReference>
<dbReference type="Gene3D" id="3.30.980.10">
    <property type="entry name" value="Threonyl-trna Synthetase, Chain A, domain 2"/>
    <property type="match status" value="1"/>
</dbReference>
<dbReference type="HAMAP" id="MF_00036_B">
    <property type="entry name" value="Ala_tRNA_synth_B"/>
    <property type="match status" value="1"/>
</dbReference>
<dbReference type="InterPro" id="IPR045864">
    <property type="entry name" value="aa-tRNA-synth_II/BPL/LPL"/>
</dbReference>
<dbReference type="InterPro" id="IPR002318">
    <property type="entry name" value="Ala-tRNA-lgiase_IIc"/>
</dbReference>
<dbReference type="InterPro" id="IPR018162">
    <property type="entry name" value="Ala-tRNA-ligase_IIc_anticod-bd"/>
</dbReference>
<dbReference type="InterPro" id="IPR018165">
    <property type="entry name" value="Ala-tRNA-synth_IIc_core"/>
</dbReference>
<dbReference type="InterPro" id="IPR018164">
    <property type="entry name" value="Ala-tRNA-synth_IIc_N"/>
</dbReference>
<dbReference type="InterPro" id="IPR050058">
    <property type="entry name" value="Ala-tRNA_ligase"/>
</dbReference>
<dbReference type="InterPro" id="IPR023033">
    <property type="entry name" value="Ala_tRNA_ligase_euk/bac"/>
</dbReference>
<dbReference type="InterPro" id="IPR003156">
    <property type="entry name" value="DHHA1_dom"/>
</dbReference>
<dbReference type="InterPro" id="IPR018163">
    <property type="entry name" value="Thr/Ala-tRNA-synth_IIc_edit"/>
</dbReference>
<dbReference type="InterPro" id="IPR009000">
    <property type="entry name" value="Transl_B-barrel_sf"/>
</dbReference>
<dbReference type="InterPro" id="IPR012947">
    <property type="entry name" value="tRNA_SAD"/>
</dbReference>
<dbReference type="NCBIfam" id="TIGR00344">
    <property type="entry name" value="alaS"/>
    <property type="match status" value="1"/>
</dbReference>
<dbReference type="PANTHER" id="PTHR11777:SF9">
    <property type="entry name" value="ALANINE--TRNA LIGASE, CYTOPLASMIC"/>
    <property type="match status" value="1"/>
</dbReference>
<dbReference type="PANTHER" id="PTHR11777">
    <property type="entry name" value="ALANYL-TRNA SYNTHETASE"/>
    <property type="match status" value="1"/>
</dbReference>
<dbReference type="Pfam" id="PF02272">
    <property type="entry name" value="DHHA1"/>
    <property type="match status" value="1"/>
</dbReference>
<dbReference type="Pfam" id="PF01411">
    <property type="entry name" value="tRNA-synt_2c"/>
    <property type="match status" value="1"/>
</dbReference>
<dbReference type="Pfam" id="PF07973">
    <property type="entry name" value="tRNA_SAD"/>
    <property type="match status" value="1"/>
</dbReference>
<dbReference type="PRINTS" id="PR00980">
    <property type="entry name" value="TRNASYNTHALA"/>
</dbReference>
<dbReference type="SMART" id="SM00863">
    <property type="entry name" value="tRNA_SAD"/>
    <property type="match status" value="1"/>
</dbReference>
<dbReference type="SUPFAM" id="SSF55681">
    <property type="entry name" value="Class II aaRS and biotin synthetases"/>
    <property type="match status" value="1"/>
</dbReference>
<dbReference type="SUPFAM" id="SSF101353">
    <property type="entry name" value="Putative anticodon-binding domain of alanyl-tRNA synthetase (AlaRS)"/>
    <property type="match status" value="1"/>
</dbReference>
<dbReference type="SUPFAM" id="SSF55186">
    <property type="entry name" value="ThrRS/AlaRS common domain"/>
    <property type="match status" value="1"/>
</dbReference>
<dbReference type="SUPFAM" id="SSF50447">
    <property type="entry name" value="Translation proteins"/>
    <property type="match status" value="1"/>
</dbReference>
<dbReference type="PROSITE" id="PS50860">
    <property type="entry name" value="AA_TRNA_LIGASE_II_ALA"/>
    <property type="match status" value="1"/>
</dbReference>
<feature type="chain" id="PRO_0000075093" description="Alanine--tRNA ligase">
    <location>
        <begin position="1"/>
        <end position="881"/>
    </location>
</feature>
<feature type="binding site" evidence="1">
    <location>
        <position position="568"/>
    </location>
    <ligand>
        <name>Zn(2+)</name>
        <dbReference type="ChEBI" id="CHEBI:29105"/>
    </ligand>
</feature>
<feature type="binding site" evidence="1">
    <location>
        <position position="572"/>
    </location>
    <ligand>
        <name>Zn(2+)</name>
        <dbReference type="ChEBI" id="CHEBI:29105"/>
    </ligand>
</feature>
<feature type="binding site" evidence="1">
    <location>
        <position position="670"/>
    </location>
    <ligand>
        <name>Zn(2+)</name>
        <dbReference type="ChEBI" id="CHEBI:29105"/>
    </ligand>
</feature>
<feature type="binding site" evidence="1">
    <location>
        <position position="674"/>
    </location>
    <ligand>
        <name>Zn(2+)</name>
        <dbReference type="ChEBI" id="CHEBI:29105"/>
    </ligand>
</feature>
<evidence type="ECO:0000255" key="1">
    <source>
        <dbReference type="HAMAP-Rule" id="MF_00036"/>
    </source>
</evidence>
<proteinExistence type="inferred from homology"/>
<name>SYA_CLOAB</name>
<gene>
    <name evidence="1" type="primary">alaS</name>
    <name type="ordered locus">CA_C1678</name>
</gene>
<protein>
    <recommendedName>
        <fullName evidence="1">Alanine--tRNA ligase</fullName>
        <ecNumber evidence="1">6.1.1.7</ecNumber>
    </recommendedName>
    <alternativeName>
        <fullName evidence="1">Alanyl-tRNA synthetase</fullName>
        <shortName evidence="1">AlaRS</shortName>
    </alternativeName>
</protein>
<comment type="function">
    <text evidence="1">Catalyzes the attachment of alanine to tRNA(Ala) in a two-step reaction: alanine is first activated by ATP to form Ala-AMP and then transferred to the acceptor end of tRNA(Ala). Also edits incorrectly charged Ser-tRNA(Ala) and Gly-tRNA(Ala) via its editing domain.</text>
</comment>
<comment type="catalytic activity">
    <reaction evidence="1">
        <text>tRNA(Ala) + L-alanine + ATP = L-alanyl-tRNA(Ala) + AMP + diphosphate</text>
        <dbReference type="Rhea" id="RHEA:12540"/>
        <dbReference type="Rhea" id="RHEA-COMP:9657"/>
        <dbReference type="Rhea" id="RHEA-COMP:9923"/>
        <dbReference type="ChEBI" id="CHEBI:30616"/>
        <dbReference type="ChEBI" id="CHEBI:33019"/>
        <dbReference type="ChEBI" id="CHEBI:57972"/>
        <dbReference type="ChEBI" id="CHEBI:78442"/>
        <dbReference type="ChEBI" id="CHEBI:78497"/>
        <dbReference type="ChEBI" id="CHEBI:456215"/>
        <dbReference type="EC" id="6.1.1.7"/>
    </reaction>
</comment>
<comment type="cofactor">
    <cofactor evidence="1">
        <name>Zn(2+)</name>
        <dbReference type="ChEBI" id="CHEBI:29105"/>
    </cofactor>
    <text evidence="1">Binds 1 zinc ion per subunit.</text>
</comment>
<comment type="subcellular location">
    <subcellularLocation>
        <location evidence="1">Cytoplasm</location>
    </subcellularLocation>
</comment>
<comment type="domain">
    <text evidence="1">Consists of three domains; the N-terminal catalytic domain, the editing domain and the C-terminal C-Ala domain. The editing domain removes incorrectly charged amino acids, while the C-Ala domain, along with tRNA(Ala), serves as a bridge to cooperatively bring together the editing and aminoacylation centers thus stimulating deacylation of misacylated tRNAs.</text>
</comment>
<comment type="similarity">
    <text evidence="1">Belongs to the class-II aminoacyl-tRNA synthetase family.</text>
</comment>
<sequence length="881" mass="99662">MKYMGLNDIRESYLSFFEKKEHLRLPSFSLIPKNDKSLLLINAGMAPLKPYFTGLQTPPKTRVTTCQKCIRTGDIENIGKTSRHGTFFEMLGNFSFGDYFKEEVISWAWEYITEVLKFPKDRIYITIYLDDDEAFKIWTEKAGVDPSRIFRFGKEDNFWEHGSGPCGPCSEMHFDRREKPDLIKTREKFIELQDKDEVIEFWNLVFTQFDKDEDGNYNKLKNPNIDTGMGLERIATIMQNTDSIFEIDTIREVLDAVCKICNVKYGENHKNDVSLRIITDHIRSVTFMISDGILPSNEGRGYVLRRLLRRAARHGKTLGIEKTFLCGLCDVVIKNSKGAYKELEEKQDYIKNVIEIEEKRFDETLDSGMEILKNYIDELSLENKKVMSGEKAFRLYDTYGFPVELTQEILEEKGIEIDMNDFHSEMEKQKNRARDAREESNYMGKEIKLIDKLPESVTTKFVGYNSTSTDSKVEVLIKDDEFVSTINEGESGIVVTEETPFYAEMGGQIGDKGIIFGKNGEAKVVDCKNNISGKIIHIVQVVKGSIEKNENVTLEVNYKKRKDICKNHTATHMLQAALKKVVGSHINQSGSYVDNERLRFDFTHFTALTDEEILKVEAMVNDEIMAAYDVKTDIMSVDEAKKTGAMALFDEKYGNRVRVVSVGDFSRELCGGTHVNNSGEIGLFKIISESGVAAGIRRIEAITGKEAVRYTEENDNLIRNIEQELKCSKKDILNKINQYHSELKEKEKEINILKGKLASGFEENILSSVKEVSGVKYVASEVKGISGDTLRELCDKVRNKIDDGMVLLASKDGEKVQFVAMASKNAVKKGVHCGKVIKEVASMCGGNGGGRPDMAQAGGKDGEKLETALKEVGNIMEKLVK</sequence>